<accession>P48425</accession>
<sequence>MIAGQPIFILKEGTKRESGKDAMKENIEAAIAISNSVRSSLGPRGMDKMLVDSLGDIVITNDGVTILKEMDVEHPAAKMMVEVSKTQDSFVGDGTTTAVIIAGGLLQQAQGLINQNVHPTVISEGYRMASEEAKRVIDEISTKIGADEKALLLKMAQTSLNSKSASVAKDKLAEISYEAVKSVAELRDGKYYVDFDNIQVVKKQGGAIDDTQLINGIIVDKEKVHPGMPDVVKDAKIALLDAPLEIKKPEFDTNLRIEDPSMIQKFLAQEENMLREMVDKIKSVGANVVITQKGIDDMAQHYLSRAGIYAVRRVKKSDMDKLAKATGASIVSTIDEISSSDLGTAERVEQVKVGEDYMTFVTGCKNPKAVSILVRGETEHVVDEMERSITDSLHVVASALEDGAYAAGGGATAAEIAFRLRSYAQKIGGRQQLAIEKFADAIEEIPRALAENAGLDPIDILLKLRAEHAKGNKTYGINVFTGEIEDMVKNGVIEPIRVGKQAIESATEAAIMILRIDDVIATKSSSSSSNPPKSGSSSESSED</sequence>
<gene>
    <name type="primary">thsB</name>
    <name type="ordered locus">Ta1276</name>
</gene>
<dbReference type="EMBL" id="Z46650">
    <property type="protein sequence ID" value="CAA86611.1"/>
    <property type="molecule type" value="Genomic_DNA"/>
</dbReference>
<dbReference type="EMBL" id="AL445067">
    <property type="protein sequence ID" value="CAC12400.1"/>
    <property type="molecule type" value="Genomic_DNA"/>
</dbReference>
<dbReference type="PIR" id="S53817">
    <property type="entry name" value="S53817"/>
</dbReference>
<dbReference type="RefSeq" id="WP_010901684.1">
    <property type="nucleotide sequence ID" value="NC_002578.1"/>
</dbReference>
<dbReference type="PDB" id="1A6D">
    <property type="method" value="X-ray"/>
    <property type="resolution" value="2.60 A"/>
    <property type="chains" value="B=1-543"/>
</dbReference>
<dbReference type="PDB" id="1A6E">
    <property type="method" value="X-ray"/>
    <property type="resolution" value="3.20 A"/>
    <property type="chains" value="B=1-543"/>
</dbReference>
<dbReference type="PDB" id="1E0R">
    <property type="method" value="X-ray"/>
    <property type="resolution" value="2.80 A"/>
    <property type="chains" value="B=214-367"/>
</dbReference>
<dbReference type="PDBsum" id="1A6D"/>
<dbReference type="PDBsum" id="1A6E"/>
<dbReference type="PDBsum" id="1E0R"/>
<dbReference type="BMRB" id="P48425"/>
<dbReference type="SMR" id="P48425"/>
<dbReference type="FunCoup" id="P48425">
    <property type="interactions" value="195"/>
</dbReference>
<dbReference type="MINT" id="P48425"/>
<dbReference type="STRING" id="273075.gene:9572500"/>
<dbReference type="PaxDb" id="273075-Ta1276"/>
<dbReference type="EnsemblBacteria" id="CAC12400">
    <property type="protein sequence ID" value="CAC12400"/>
    <property type="gene ID" value="CAC12400"/>
</dbReference>
<dbReference type="KEGG" id="tac:Ta1276"/>
<dbReference type="eggNOG" id="arCOG01257">
    <property type="taxonomic scope" value="Archaea"/>
</dbReference>
<dbReference type="HOGENOM" id="CLU_008891_7_3_2"/>
<dbReference type="InParanoid" id="P48425"/>
<dbReference type="OrthoDB" id="9362at2157"/>
<dbReference type="BRENDA" id="3.6.4.B10">
    <property type="organism ID" value="6324"/>
</dbReference>
<dbReference type="BRENDA" id="5.6.1.7">
    <property type="organism ID" value="6324"/>
</dbReference>
<dbReference type="EvolutionaryTrace" id="P48425"/>
<dbReference type="Proteomes" id="UP000001024">
    <property type="component" value="Chromosome"/>
</dbReference>
<dbReference type="GO" id="GO:0005524">
    <property type="term" value="F:ATP binding"/>
    <property type="evidence" value="ECO:0007669"/>
    <property type="project" value="UniProtKB-KW"/>
</dbReference>
<dbReference type="GO" id="GO:0016887">
    <property type="term" value="F:ATP hydrolysis activity"/>
    <property type="evidence" value="ECO:0007669"/>
    <property type="project" value="InterPro"/>
</dbReference>
<dbReference type="GO" id="GO:0140662">
    <property type="term" value="F:ATP-dependent protein folding chaperone"/>
    <property type="evidence" value="ECO:0007669"/>
    <property type="project" value="InterPro"/>
</dbReference>
<dbReference type="GO" id="GO:0051082">
    <property type="term" value="F:unfolded protein binding"/>
    <property type="evidence" value="ECO:0007669"/>
    <property type="project" value="InterPro"/>
</dbReference>
<dbReference type="CDD" id="cd03343">
    <property type="entry name" value="cpn60"/>
    <property type="match status" value="1"/>
</dbReference>
<dbReference type="FunFam" id="1.10.560.10:FF:000017">
    <property type="entry name" value="T-complex protein 1 subunit eta"/>
    <property type="match status" value="1"/>
</dbReference>
<dbReference type="Gene3D" id="3.50.7.10">
    <property type="entry name" value="GroEL"/>
    <property type="match status" value="1"/>
</dbReference>
<dbReference type="Gene3D" id="1.10.560.10">
    <property type="entry name" value="GroEL-like equatorial domain"/>
    <property type="match status" value="1"/>
</dbReference>
<dbReference type="Gene3D" id="3.30.260.10">
    <property type="entry name" value="TCP-1-like chaperonin intermediate domain"/>
    <property type="match status" value="1"/>
</dbReference>
<dbReference type="InterPro" id="IPR017998">
    <property type="entry name" value="Chaperone_TCP-1"/>
</dbReference>
<dbReference type="InterPro" id="IPR002194">
    <property type="entry name" value="Chaperonin_TCP-1_CS"/>
</dbReference>
<dbReference type="InterPro" id="IPR002423">
    <property type="entry name" value="Cpn60/GroEL/TCP-1"/>
</dbReference>
<dbReference type="InterPro" id="IPR027409">
    <property type="entry name" value="GroEL-like_apical_dom_sf"/>
</dbReference>
<dbReference type="InterPro" id="IPR027413">
    <property type="entry name" value="GROEL-like_equatorial_sf"/>
</dbReference>
<dbReference type="InterPro" id="IPR027410">
    <property type="entry name" value="TCP-1-like_intermed_sf"/>
</dbReference>
<dbReference type="InterPro" id="IPR053374">
    <property type="entry name" value="TCP-1_chaperonin"/>
</dbReference>
<dbReference type="InterPro" id="IPR054827">
    <property type="entry name" value="thermosome_alpha"/>
</dbReference>
<dbReference type="InterPro" id="IPR012714">
    <property type="entry name" value="Thermosome_arc"/>
</dbReference>
<dbReference type="NCBIfam" id="NF041082">
    <property type="entry name" value="thermosome_alpha"/>
    <property type="match status" value="1"/>
</dbReference>
<dbReference type="NCBIfam" id="TIGR02339">
    <property type="entry name" value="thermosome_arch"/>
    <property type="match status" value="1"/>
</dbReference>
<dbReference type="NCBIfam" id="NF041083">
    <property type="entry name" value="thermosome_beta"/>
    <property type="match status" value="1"/>
</dbReference>
<dbReference type="PANTHER" id="PTHR11353">
    <property type="entry name" value="CHAPERONIN"/>
    <property type="match status" value="1"/>
</dbReference>
<dbReference type="Pfam" id="PF00118">
    <property type="entry name" value="Cpn60_TCP1"/>
    <property type="match status" value="1"/>
</dbReference>
<dbReference type="PRINTS" id="PR00304">
    <property type="entry name" value="TCOMPLEXTCP1"/>
</dbReference>
<dbReference type="SUPFAM" id="SSF52029">
    <property type="entry name" value="GroEL apical domain-like"/>
    <property type="match status" value="1"/>
</dbReference>
<dbReference type="SUPFAM" id="SSF48592">
    <property type="entry name" value="GroEL equatorial domain-like"/>
    <property type="match status" value="1"/>
</dbReference>
<dbReference type="SUPFAM" id="SSF54849">
    <property type="entry name" value="GroEL-intermediate domain like"/>
    <property type="match status" value="1"/>
</dbReference>
<dbReference type="PROSITE" id="PS00750">
    <property type="entry name" value="TCP1_1"/>
    <property type="match status" value="1"/>
</dbReference>
<dbReference type="PROSITE" id="PS00751">
    <property type="entry name" value="TCP1_2"/>
    <property type="match status" value="1"/>
</dbReference>
<dbReference type="PROSITE" id="PS00995">
    <property type="entry name" value="TCP1_3"/>
    <property type="match status" value="1"/>
</dbReference>
<evidence type="ECO:0000256" key="1">
    <source>
        <dbReference type="SAM" id="MobiDB-lite"/>
    </source>
</evidence>
<evidence type="ECO:0000305" key="2"/>
<evidence type="ECO:0007829" key="3">
    <source>
        <dbReference type="PDB" id="1A6D"/>
    </source>
</evidence>
<feature type="chain" id="PRO_0000128410" description="Thermosome subunit beta">
    <location>
        <begin position="1"/>
        <end position="543"/>
    </location>
</feature>
<feature type="region of interest" description="Disordered" evidence="1">
    <location>
        <begin position="522"/>
        <end position="543"/>
    </location>
</feature>
<feature type="compositionally biased region" description="Low complexity" evidence="1">
    <location>
        <begin position="523"/>
        <end position="543"/>
    </location>
</feature>
<feature type="helix" evidence="3">
    <location>
        <begin position="21"/>
        <end position="38"/>
    </location>
</feature>
<feature type="strand" evidence="3">
    <location>
        <begin position="48"/>
        <end position="51"/>
    </location>
</feature>
<feature type="strand" evidence="3">
    <location>
        <begin position="57"/>
        <end position="60"/>
    </location>
</feature>
<feature type="helix" evidence="3">
    <location>
        <begin position="63"/>
        <end position="69"/>
    </location>
</feature>
<feature type="helix" evidence="3">
    <location>
        <begin position="75"/>
        <end position="84"/>
    </location>
</feature>
<feature type="helix" evidence="3">
    <location>
        <begin position="94"/>
        <end position="114"/>
    </location>
</feature>
<feature type="helix" evidence="3">
    <location>
        <begin position="119"/>
        <end position="140"/>
    </location>
</feature>
<feature type="helix" evidence="3">
    <location>
        <begin position="148"/>
        <end position="160"/>
    </location>
</feature>
<feature type="helix" evidence="3">
    <location>
        <begin position="164"/>
        <end position="168"/>
    </location>
</feature>
<feature type="helix" evidence="3">
    <location>
        <begin position="169"/>
        <end position="183"/>
    </location>
</feature>
<feature type="strand" evidence="3">
    <location>
        <begin position="184"/>
        <end position="186"/>
    </location>
</feature>
<feature type="strand" evidence="3">
    <location>
        <begin position="188"/>
        <end position="193"/>
    </location>
</feature>
<feature type="helix" evidence="3">
    <location>
        <begin position="195"/>
        <end position="197"/>
    </location>
</feature>
<feature type="strand" evidence="3">
    <location>
        <begin position="198"/>
        <end position="206"/>
    </location>
</feature>
<feature type="helix" evidence="3">
    <location>
        <begin position="208"/>
        <end position="210"/>
    </location>
</feature>
<feature type="strand" evidence="3">
    <location>
        <begin position="212"/>
        <end position="220"/>
    </location>
</feature>
<feature type="strand" evidence="3">
    <location>
        <begin position="230"/>
        <end position="242"/>
    </location>
</feature>
<feature type="strand" evidence="3">
    <location>
        <begin position="250"/>
        <end position="255"/>
    </location>
</feature>
<feature type="helix" evidence="3">
    <location>
        <begin position="262"/>
        <end position="283"/>
    </location>
</feature>
<feature type="strand" evidence="3">
    <location>
        <begin position="288"/>
        <end position="293"/>
    </location>
</feature>
<feature type="helix" evidence="3">
    <location>
        <begin position="297"/>
        <end position="305"/>
    </location>
</feature>
<feature type="strand" evidence="3">
    <location>
        <begin position="309"/>
        <end position="311"/>
    </location>
</feature>
<feature type="helix" evidence="3">
    <location>
        <begin position="316"/>
        <end position="326"/>
    </location>
</feature>
<feature type="strand" evidence="3">
    <location>
        <begin position="330"/>
        <end position="332"/>
    </location>
</feature>
<feature type="helix" evidence="3">
    <location>
        <begin position="334"/>
        <end position="336"/>
    </location>
</feature>
<feature type="helix" evidence="3">
    <location>
        <begin position="339"/>
        <end position="341"/>
    </location>
</feature>
<feature type="strand" evidence="3">
    <location>
        <begin position="343"/>
        <end position="353"/>
    </location>
</feature>
<feature type="strand" evidence="3">
    <location>
        <begin position="356"/>
        <end position="368"/>
    </location>
</feature>
<feature type="strand" evidence="3">
    <location>
        <begin position="370"/>
        <end position="378"/>
    </location>
</feature>
<feature type="helix" evidence="3">
    <location>
        <begin position="379"/>
        <end position="402"/>
    </location>
</feature>
<feature type="strand" evidence="3">
    <location>
        <begin position="404"/>
        <end position="407"/>
    </location>
</feature>
<feature type="turn" evidence="3">
    <location>
        <begin position="408"/>
        <end position="410"/>
    </location>
</feature>
<feature type="helix" evidence="3">
    <location>
        <begin position="411"/>
        <end position="426"/>
    </location>
</feature>
<feature type="helix" evidence="3">
    <location>
        <begin position="431"/>
        <end position="442"/>
    </location>
</feature>
<feature type="helix" evidence="3">
    <location>
        <begin position="444"/>
        <end position="453"/>
    </location>
</feature>
<feature type="helix" evidence="3">
    <location>
        <begin position="457"/>
        <end position="469"/>
    </location>
</feature>
<feature type="strand" evidence="3">
    <location>
        <begin position="475"/>
        <end position="478"/>
    </location>
</feature>
<feature type="turn" evidence="3">
    <location>
        <begin position="479"/>
        <end position="482"/>
    </location>
</feature>
<feature type="strand" evidence="3">
    <location>
        <begin position="483"/>
        <end position="486"/>
    </location>
</feature>
<feature type="turn" evidence="3">
    <location>
        <begin position="487"/>
        <end position="491"/>
    </location>
</feature>
<feature type="strand" evidence="3">
    <location>
        <begin position="493"/>
        <end position="495"/>
    </location>
</feature>
<feature type="helix" evidence="3">
    <location>
        <begin position="496"/>
        <end position="515"/>
    </location>
</feature>
<feature type="strand" evidence="3">
    <location>
        <begin position="516"/>
        <end position="520"/>
    </location>
</feature>
<keyword id="KW-0002">3D-structure</keyword>
<keyword id="KW-0067">ATP-binding</keyword>
<keyword id="KW-0143">Chaperone</keyword>
<keyword id="KW-0903">Direct protein sequencing</keyword>
<keyword id="KW-0547">Nucleotide-binding</keyword>
<keyword id="KW-1185">Reference proteome</keyword>
<name>THSB_THEAC</name>
<proteinExistence type="evidence at protein level"/>
<comment type="function">
    <text>Molecular chaperone; binds unfolded polypeptides in vitro, and has a weak ATPase activity.</text>
</comment>
<comment type="subunit">
    <text>Forms a Heterooligomeric complex of two stacked eight-membered rings.</text>
</comment>
<comment type="PTM">
    <text>The N-terminus is blocked.</text>
</comment>
<comment type="similarity">
    <text evidence="2">Belongs to the TCP-1 chaperonin family.</text>
</comment>
<protein>
    <recommendedName>
        <fullName>Thermosome subunit beta</fullName>
    </recommendedName>
    <alternativeName>
        <fullName>Chaperonin subunit beta</fullName>
    </alternativeName>
    <alternativeName>
        <fullName>Thermosome subunit 2</fullName>
    </alternativeName>
</protein>
<organism>
    <name type="scientific">Thermoplasma acidophilum (strain ATCC 25905 / DSM 1728 / JCM 9062 / NBRC 15155 / AMRC-C165)</name>
    <dbReference type="NCBI Taxonomy" id="273075"/>
    <lineage>
        <taxon>Archaea</taxon>
        <taxon>Methanobacteriati</taxon>
        <taxon>Thermoplasmatota</taxon>
        <taxon>Thermoplasmata</taxon>
        <taxon>Thermoplasmatales</taxon>
        <taxon>Thermoplasmataceae</taxon>
        <taxon>Thermoplasma</taxon>
    </lineage>
</organism>
<reference key="1">
    <citation type="journal article" date="1995" name="Biol. Chem. Hoppe-Seyler">
        <title>Primary structure of the thermosome from Thermoplasma acidophilum.</title>
        <authorList>
            <person name="Waldmann T."/>
            <person name="Lupas A.N."/>
            <person name="Kellermann J."/>
            <person name="Peters J."/>
            <person name="Baumeister W."/>
        </authorList>
    </citation>
    <scope>NUCLEOTIDE SEQUENCE [GENOMIC DNA]</scope>
    <scope>PROTEIN SEQUENCE OF 188-195</scope>
    <source>
        <strain>ATCC 25905 / DSM 1728 / JCM 9062 / NBRC 15155 / AMRC-C165</strain>
    </source>
</reference>
<reference key="2">
    <citation type="journal article" date="2000" name="Nature">
        <title>The genome sequence of the thermoacidophilic scavenger Thermoplasma acidophilum.</title>
        <authorList>
            <person name="Ruepp A."/>
            <person name="Graml W."/>
            <person name="Santos-Martinez M.-L."/>
            <person name="Koretke K.K."/>
            <person name="Volker C."/>
            <person name="Mewes H.-W."/>
            <person name="Frishman D."/>
            <person name="Stocker S."/>
            <person name="Lupas A.N."/>
            <person name="Baumeister W."/>
        </authorList>
    </citation>
    <scope>NUCLEOTIDE SEQUENCE [LARGE SCALE GENOMIC DNA]</scope>
    <source>
        <strain>ATCC 25905 / DSM 1728 / JCM 9062 / NBRC 15155 / AMRC-C165</strain>
    </source>
</reference>
<reference key="3">
    <citation type="journal article" date="1995" name="Eur. J. Biochem.">
        <title>The thermosome of Thermoplasma acidophilum and its relationship to the eukaryotic chaperonin TRiC.</title>
        <authorList>
            <person name="Waldmann T."/>
            <person name="Nimmesgern E."/>
            <person name="Nitsch M."/>
            <person name="Peters J."/>
            <person name="Pfeifer G."/>
            <person name="Mueller S."/>
            <person name="Kellermann J."/>
            <person name="Engel A."/>
            <person name="Hartl F.-U."/>
            <person name="Baumeister W."/>
        </authorList>
    </citation>
    <scope>PROTEIN SEQUENCE OF 80-113 AND 421-445</scope>
    <source>
        <strain>ATCC 25905 / DSM 1728 / JCM 9062 / NBRC 15155 / AMRC-C165</strain>
    </source>
</reference>
<reference key="4">
    <citation type="journal article" date="1998" name="Cell">
        <title>Crystal structure of the thermosome, the archaeal chaperonin and homolog of CCT.</title>
        <authorList>
            <person name="Ditzel L."/>
            <person name="Loewe J."/>
            <person name="Stock D."/>
            <person name="Stetter K.-O."/>
            <person name="Huber H."/>
            <person name="Huber R."/>
            <person name="Steinbacher S."/>
        </authorList>
    </citation>
    <scope>X-RAY CRYSTALLOGRAPHY (3.2 ANGSTROMS)</scope>
</reference>